<feature type="chain" id="PRO_0000081552" description="Pre-mRNA-splicing factor CWC2">
    <location>
        <begin position="1"/>
        <end position="339"/>
    </location>
</feature>
<feature type="domain" description="RRM" evidence="1">
    <location>
        <begin position="135"/>
        <end position="228"/>
    </location>
</feature>
<feature type="zinc finger region" description="C3H1-type" evidence="2">
    <location>
        <begin position="67"/>
        <end position="94"/>
    </location>
</feature>
<feature type="region of interest" description="Disordered" evidence="3">
    <location>
        <begin position="313"/>
        <end position="339"/>
    </location>
</feature>
<feature type="modified residue" description="Phosphoserine" evidence="14">
    <location>
        <position position="335"/>
    </location>
</feature>
<feature type="modified residue" description="Phosphoserine" evidence="14">
    <location>
        <position position="336"/>
    </location>
</feature>
<feature type="mutagenesis site" description="Inhibits cell growth." evidence="10">
    <original>C</original>
    <variation>Y</variation>
    <location>
        <position position="73"/>
    </location>
</feature>
<feature type="mutagenesis site" description="No effect. Synthetic lethal when associated with CLF1 lacking a TPR domain." evidence="6">
    <original>G</original>
    <variation>D</variation>
    <location>
        <position position="79"/>
    </location>
</feature>
<feature type="mutagenesis site" description="Inhibits cell growth." evidence="10">
    <original>C</original>
    <variation>H</variation>
    <location>
        <position position="87"/>
    </location>
</feature>
<feature type="mutagenesis site" description="Inhibits cell growth." evidence="10">
    <original>F</original>
    <variation>D</variation>
    <location>
        <position position="186"/>
    </location>
</feature>
<feature type="helix" evidence="16">
    <location>
        <begin position="4"/>
        <end position="6"/>
    </location>
</feature>
<feature type="helix" evidence="16">
    <location>
        <begin position="15"/>
        <end position="17"/>
    </location>
</feature>
<feature type="strand" evidence="15">
    <location>
        <begin position="25"/>
        <end position="27"/>
    </location>
</feature>
<feature type="helix" evidence="16">
    <location>
        <begin position="30"/>
        <end position="39"/>
    </location>
</feature>
<feature type="strand" evidence="16">
    <location>
        <begin position="41"/>
        <end position="45"/>
    </location>
</feature>
<feature type="helix" evidence="16">
    <location>
        <begin position="55"/>
        <end position="58"/>
    </location>
</feature>
<feature type="helix" evidence="16">
    <location>
        <begin position="63"/>
        <end position="66"/>
    </location>
</feature>
<feature type="helix" evidence="16">
    <location>
        <begin position="74"/>
        <end position="77"/>
    </location>
</feature>
<feature type="helix" evidence="16">
    <location>
        <begin position="84"/>
        <end position="86"/>
    </location>
</feature>
<feature type="strand" evidence="16">
    <location>
        <begin position="88"/>
        <end position="92"/>
    </location>
</feature>
<feature type="helix" evidence="16">
    <location>
        <begin position="96"/>
        <end position="105"/>
    </location>
</feature>
<feature type="strand" evidence="16">
    <location>
        <begin position="107"/>
        <end position="109"/>
    </location>
</feature>
<feature type="strand" evidence="16">
    <location>
        <begin position="113"/>
        <end position="115"/>
    </location>
</feature>
<feature type="helix" evidence="16">
    <location>
        <begin position="117"/>
        <end position="119"/>
    </location>
</feature>
<feature type="strand" evidence="15">
    <location>
        <begin position="125"/>
        <end position="127"/>
    </location>
</feature>
<feature type="helix" evidence="15">
    <location>
        <begin position="129"/>
        <end position="133"/>
    </location>
</feature>
<feature type="strand" evidence="16">
    <location>
        <begin position="136"/>
        <end position="140"/>
    </location>
</feature>
<feature type="helix" evidence="16">
    <location>
        <begin position="144"/>
        <end position="146"/>
    </location>
</feature>
<feature type="helix" evidence="16">
    <location>
        <begin position="153"/>
        <end position="165"/>
    </location>
</feature>
<feature type="strand" evidence="16">
    <location>
        <begin position="170"/>
        <end position="176"/>
    </location>
</feature>
<feature type="helix" evidence="16">
    <location>
        <begin position="177"/>
        <end position="179"/>
    </location>
</feature>
<feature type="strand" evidence="16">
    <location>
        <begin position="181"/>
        <end position="188"/>
    </location>
</feature>
<feature type="helix" evidence="16">
    <location>
        <begin position="189"/>
        <end position="199"/>
    </location>
</feature>
<feature type="strand" evidence="17">
    <location>
        <begin position="207"/>
        <end position="209"/>
    </location>
</feature>
<feature type="helix" evidence="16">
    <location>
        <begin position="212"/>
        <end position="217"/>
    </location>
</feature>
<feature type="strand" evidence="16">
    <location>
        <begin position="222"/>
        <end position="225"/>
    </location>
</feature>
<feature type="helix" evidence="18">
    <location>
        <begin position="232"/>
        <end position="256"/>
    </location>
</feature>
<comment type="function">
    <text evidence="10 11">Involved in the first step of pre-mRNA splicing. Required for cell growth and cell cycle control. Plays a role in the levels of the U1, U4, U5 and U6 snRNAs and the maintenance of the U4/U6 snRNA complex. May provide the link between the 'nineteen complex' NTC spliceosome protein complex and the spliceosome through the U6 snRNA. Associates predominantly with U6 snRNAs in assembled active spliceosomes. Binds directly to the internal stem-loop (ISL) domain of the U6 snRNA and to the pre-mRNA intron near the 5' splice site during the activation and catalytic phases of the spliceosome cycle. Binds also to U1, U4, U5 and U6 snRNAs and to pre-mRNAs, in vitro. Is not required for the Prp2-mediated remodeling of the activated spliceosome.</text>
</comment>
<comment type="subunit">
    <text evidence="4 5 9 12">Belongs to the CWC complex (or CEF1-associated complex), a spliceosome subcomplex composed of the U2, U5 and U6 snRNAs and at least BUD13, BUD31, BRR2, CDC40, CEF1, CLF1, CUS1, CWC2, CWC15, CWC21, CWC22, CWC23, CWC24, CWC25, CWC27, ECM2, HSH155, IST3, ISY1, LEA1, MSL1, NTC20, PRP8, PRP9, PRP11, PRP19, PRP21, PRP22, PRP45, PRP46, SLU7, SMB1, SMD1, SMD2, SMD3, SMX2, SMX3, SNT309, SNU114, SPP2, SYF1, SYF2, RSE1 and YJU2. Interacts with ISY1. Interacts with PRP19.</text>
</comment>
<comment type="interaction">
    <interactant intactId="EBI-553">
        <id>Q12046</id>
    </interactant>
    <interactant intactId="EBI-493">
        <id>P32523</id>
        <label>PRP19</label>
    </interactant>
    <organismsDiffer>false</organismsDiffer>
    <experiments>14</experiments>
</comment>
<comment type="subcellular location">
    <subcellularLocation>
        <location evidence="7">Nucleus</location>
    </subcellularLocation>
</comment>
<comment type="domain">
    <text>The C-terminal RRM domain and the zinc finger motif are necessary for RNA-binding.</text>
</comment>
<comment type="miscellaneous">
    <text evidence="8">Present with 2650 molecules/cell in log phase SD medium.</text>
</comment>
<comment type="similarity">
    <text evidence="13">Belongs to the RRM CWC2 family.</text>
</comment>
<organism>
    <name type="scientific">Saccharomyces cerevisiae (strain ATCC 204508 / S288c)</name>
    <name type="common">Baker's yeast</name>
    <dbReference type="NCBI Taxonomy" id="559292"/>
    <lineage>
        <taxon>Eukaryota</taxon>
        <taxon>Fungi</taxon>
        <taxon>Dikarya</taxon>
        <taxon>Ascomycota</taxon>
        <taxon>Saccharomycotina</taxon>
        <taxon>Saccharomycetes</taxon>
        <taxon>Saccharomycetales</taxon>
        <taxon>Saccharomycetaceae</taxon>
        <taxon>Saccharomyces</taxon>
    </lineage>
</organism>
<evidence type="ECO:0000255" key="1">
    <source>
        <dbReference type="PROSITE-ProRule" id="PRU00176"/>
    </source>
</evidence>
<evidence type="ECO:0000255" key="2">
    <source>
        <dbReference type="PROSITE-ProRule" id="PRU00723"/>
    </source>
</evidence>
<evidence type="ECO:0000256" key="3">
    <source>
        <dbReference type="SAM" id="MobiDB-lite"/>
    </source>
</evidence>
<evidence type="ECO:0000269" key="4">
    <source>
    </source>
</evidence>
<evidence type="ECO:0000269" key="5">
    <source>
    </source>
</evidence>
<evidence type="ECO:0000269" key="6">
    <source>
    </source>
</evidence>
<evidence type="ECO:0000269" key="7">
    <source>
    </source>
</evidence>
<evidence type="ECO:0000269" key="8">
    <source>
    </source>
</evidence>
<evidence type="ECO:0000269" key="9">
    <source>
    </source>
</evidence>
<evidence type="ECO:0000269" key="10">
    <source>
    </source>
</evidence>
<evidence type="ECO:0000269" key="11">
    <source>
    </source>
</evidence>
<evidence type="ECO:0000269" key="12">
    <source>
    </source>
</evidence>
<evidence type="ECO:0000305" key="13"/>
<evidence type="ECO:0007744" key="14">
    <source>
    </source>
</evidence>
<evidence type="ECO:0007829" key="15">
    <source>
        <dbReference type="PDB" id="3TP2"/>
    </source>
</evidence>
<evidence type="ECO:0007829" key="16">
    <source>
        <dbReference type="PDB" id="3U1L"/>
    </source>
</evidence>
<evidence type="ECO:0007829" key="17">
    <source>
        <dbReference type="PDB" id="5GMK"/>
    </source>
</evidence>
<evidence type="ECO:0007829" key="18">
    <source>
        <dbReference type="PDB" id="9DTR"/>
    </source>
</evidence>
<gene>
    <name type="primary">CWC2</name>
    <name type="synonym">NTC40</name>
    <name type="synonym">SLC3</name>
    <name type="ordered locus">YDL209C</name>
    <name type="ORF">D1041</name>
</gene>
<protein>
    <recommendedName>
        <fullName>Pre-mRNA-splicing factor CWC2</fullName>
    </recommendedName>
    <alternativeName>
        <fullName>Complexed with CEF1 protein 2</fullName>
    </alternativeName>
    <alternativeName>
        <fullName>PRP19-associated complex protein 40</fullName>
    </alternativeName>
    <alternativeName>
        <fullName>Synthetic lethal with CLF1 protein 3</fullName>
    </alternativeName>
</protein>
<reference key="1">
    <citation type="journal article" date="1997" name="Yeast">
        <title>The nucleotide sequence of a 39 kb segment of yeast chromosome IV: 12 new open reading frames, nine known genes and one gene for Gly-tRNA.</title>
        <authorList>
            <person name="Bahr A."/>
            <person name="Moeller-Rieker S."/>
            <person name="Hankeln T."/>
            <person name="Kraemer C."/>
            <person name="Protin U."/>
            <person name="Schmidt E.R."/>
        </authorList>
    </citation>
    <scope>NUCLEOTIDE SEQUENCE [LARGE SCALE GENOMIC DNA]</scope>
    <source>
        <strain>ATCC 96604 / S288c / FY1679</strain>
    </source>
</reference>
<reference key="2">
    <citation type="journal article" date="2014" name="G3 (Bethesda)">
        <title>The reference genome sequence of Saccharomyces cerevisiae: Then and now.</title>
        <authorList>
            <person name="Engel S.R."/>
            <person name="Dietrich F.S."/>
            <person name="Fisk D.G."/>
            <person name="Binkley G."/>
            <person name="Balakrishnan R."/>
            <person name="Costanzo M.C."/>
            <person name="Dwight S.S."/>
            <person name="Hitz B.C."/>
            <person name="Karra K."/>
            <person name="Nash R.S."/>
            <person name="Weng S."/>
            <person name="Wong E.D."/>
            <person name="Lloyd P."/>
            <person name="Skrzypek M.S."/>
            <person name="Miyasato S.R."/>
            <person name="Simison M."/>
            <person name="Cherry J.M."/>
        </authorList>
    </citation>
    <scope>GENOME REANNOTATION</scope>
    <source>
        <strain>ATCC 204508 / S288c</strain>
    </source>
</reference>
<reference key="3">
    <citation type="journal article" date="1997" name="Nature">
        <title>The nucleotide sequence of Saccharomyces cerevisiae chromosome IV.</title>
        <authorList>
            <person name="Jacq C."/>
            <person name="Alt-Moerbe J."/>
            <person name="Andre B."/>
            <person name="Arnold W."/>
            <person name="Bahr A."/>
            <person name="Ballesta J.P.G."/>
            <person name="Bargues M."/>
            <person name="Baron L."/>
            <person name="Becker A."/>
            <person name="Biteau N."/>
            <person name="Bloecker H."/>
            <person name="Blugeon C."/>
            <person name="Boskovic J."/>
            <person name="Brandt P."/>
            <person name="Brueckner M."/>
            <person name="Buitrago M.J."/>
            <person name="Coster F."/>
            <person name="Delaveau T."/>
            <person name="del Rey F."/>
            <person name="Dujon B."/>
            <person name="Eide L.G."/>
            <person name="Garcia-Cantalejo J.M."/>
            <person name="Goffeau A."/>
            <person name="Gomez-Peris A."/>
            <person name="Granotier C."/>
            <person name="Hanemann V."/>
            <person name="Hankeln T."/>
            <person name="Hoheisel J.D."/>
            <person name="Jaeger W."/>
            <person name="Jimenez A."/>
            <person name="Jonniaux J.-L."/>
            <person name="Kraemer C."/>
            <person name="Kuester H."/>
            <person name="Laamanen P."/>
            <person name="Legros Y."/>
            <person name="Louis E.J."/>
            <person name="Moeller-Rieker S."/>
            <person name="Monnet A."/>
            <person name="Moro M."/>
            <person name="Mueller-Auer S."/>
            <person name="Nussbaumer B."/>
            <person name="Paricio N."/>
            <person name="Paulin L."/>
            <person name="Perea J."/>
            <person name="Perez-Alonso M."/>
            <person name="Perez-Ortin J.E."/>
            <person name="Pohl T.M."/>
            <person name="Prydz H."/>
            <person name="Purnelle B."/>
            <person name="Rasmussen S.W."/>
            <person name="Remacha M.A."/>
            <person name="Revuelta J.L."/>
            <person name="Rieger M."/>
            <person name="Salom D."/>
            <person name="Saluz H.P."/>
            <person name="Saiz J.E."/>
            <person name="Saren A.-M."/>
            <person name="Schaefer M."/>
            <person name="Scharfe M."/>
            <person name="Schmidt E.R."/>
            <person name="Schneider C."/>
            <person name="Scholler P."/>
            <person name="Schwarz S."/>
            <person name="Soler-Mira A."/>
            <person name="Urrestarazu L.A."/>
            <person name="Verhasselt P."/>
            <person name="Vissers S."/>
            <person name="Voet M."/>
            <person name="Volckaert G."/>
            <person name="Wagner G."/>
            <person name="Wambutt R."/>
            <person name="Wedler E."/>
            <person name="Wedler H."/>
            <person name="Woelfl S."/>
            <person name="Harris D.E."/>
            <person name="Bowman S."/>
            <person name="Brown D."/>
            <person name="Churcher C.M."/>
            <person name="Connor R."/>
            <person name="Dedman K."/>
            <person name="Gentles S."/>
            <person name="Hamlin N."/>
            <person name="Hunt S."/>
            <person name="Jones L."/>
            <person name="McDonald S."/>
            <person name="Murphy L.D."/>
            <person name="Niblett D."/>
            <person name="Odell C."/>
            <person name="Oliver K."/>
            <person name="Rajandream M.A."/>
            <person name="Richards C."/>
            <person name="Shore L."/>
            <person name="Walsh S.V."/>
            <person name="Barrell B.G."/>
            <person name="Dietrich F.S."/>
            <person name="Mulligan J.T."/>
            <person name="Allen E."/>
            <person name="Araujo R."/>
            <person name="Aviles E."/>
            <person name="Berno A."/>
            <person name="Carpenter J."/>
            <person name="Chen E."/>
            <person name="Cherry J.M."/>
            <person name="Chung E."/>
            <person name="Duncan M."/>
            <person name="Hunicke-Smith S."/>
            <person name="Hyman R.W."/>
            <person name="Komp C."/>
            <person name="Lashkari D."/>
            <person name="Lew H."/>
            <person name="Lin D."/>
            <person name="Mosedale D."/>
            <person name="Nakahara K."/>
            <person name="Namath A."/>
            <person name="Oefner P."/>
            <person name="Oh C."/>
            <person name="Petel F.X."/>
            <person name="Roberts D."/>
            <person name="Schramm S."/>
            <person name="Schroeder M."/>
            <person name="Shogren T."/>
            <person name="Shroff N."/>
            <person name="Winant A."/>
            <person name="Yelton M.A."/>
            <person name="Botstein D."/>
            <person name="Davis R.W."/>
            <person name="Johnston M."/>
            <person name="Andrews S."/>
            <person name="Brinkman R."/>
            <person name="Cooper J."/>
            <person name="Ding H."/>
            <person name="Du Z."/>
            <person name="Favello A."/>
            <person name="Fulton L."/>
            <person name="Gattung S."/>
            <person name="Greco T."/>
            <person name="Hallsworth K."/>
            <person name="Hawkins J."/>
            <person name="Hillier L.W."/>
            <person name="Jier M."/>
            <person name="Johnson D."/>
            <person name="Johnston L."/>
            <person name="Kirsten J."/>
            <person name="Kucaba T."/>
            <person name="Langston Y."/>
            <person name="Latreille P."/>
            <person name="Le T."/>
            <person name="Mardis E."/>
            <person name="Menezes S."/>
            <person name="Miller N."/>
            <person name="Nhan M."/>
            <person name="Pauley A."/>
            <person name="Peluso D."/>
            <person name="Rifkin L."/>
            <person name="Riles L."/>
            <person name="Taich A."/>
            <person name="Trevaskis E."/>
            <person name="Vignati D."/>
            <person name="Wilcox L."/>
            <person name="Wohldman P."/>
            <person name="Vaudin M."/>
            <person name="Wilson R."/>
            <person name="Waterston R."/>
            <person name="Albermann K."/>
            <person name="Hani J."/>
            <person name="Heumann K."/>
            <person name="Kleine K."/>
            <person name="Mewes H.-W."/>
            <person name="Zollner A."/>
            <person name="Zaccaria P."/>
        </authorList>
    </citation>
    <scope>NUCLEOTIDE SEQUENCE [LARGE SCALE GENOMIC DNA]</scope>
    <source>
        <strain>ATCC 204508 / S288c</strain>
    </source>
</reference>
<reference key="4">
    <citation type="journal article" date="2007" name="Genome Res.">
        <title>Approaching a complete repository of sequence-verified protein-encoding clones for Saccharomyces cerevisiae.</title>
        <authorList>
            <person name="Hu Y."/>
            <person name="Rolfs A."/>
            <person name="Bhullar B."/>
            <person name="Murthy T.V.S."/>
            <person name="Zhu C."/>
            <person name="Berger M.F."/>
            <person name="Camargo A.A."/>
            <person name="Kelley F."/>
            <person name="McCarron S."/>
            <person name="Jepson D."/>
            <person name="Richardson A."/>
            <person name="Raphael J."/>
            <person name="Moreira D."/>
            <person name="Taycher E."/>
            <person name="Zuo D."/>
            <person name="Mohr S."/>
            <person name="Kane M.F."/>
            <person name="Williamson J."/>
            <person name="Simpson A.J.G."/>
            <person name="Bulyk M.L."/>
            <person name="Harlow E."/>
            <person name="Marsischky G."/>
            <person name="Kolodner R.D."/>
            <person name="LaBaer J."/>
        </authorList>
    </citation>
    <scope>NUCLEOTIDE SEQUENCE [GENOMIC DNA]</scope>
    <source>
        <strain>ATCC 204508 / S288c</strain>
    </source>
</reference>
<reference key="5">
    <citation type="journal article" date="1998" name="Mol. Cell. Biol.">
        <title>Snt309p, a component of the Prp19p-associated complex that interacts with Prp19p and associates with the spliceosome simultaneously with or immediately after dissociation of U4 in the same manner as Prp19p.</title>
        <authorList>
            <person name="Chen H.-R."/>
            <person name="Jan S.-P."/>
            <person name="Tsao T.Y."/>
            <person name="Sheu Y.-J."/>
            <person name="Banroques J."/>
            <person name="Cheng S.-C."/>
        </authorList>
    </citation>
    <scope>INTERACTION WITH PRP19</scope>
</reference>
<reference key="6">
    <citation type="journal article" date="2002" name="Mol. Cell. Biol.">
        <title>Proteomics analysis reveals stable multiprotein complexes in both fission and budding yeasts containing Myb-related Cdc5p/Cef1p, novel pre-mRNA splicing factors, and snRNAs.</title>
        <authorList>
            <person name="Ohi M.D."/>
            <person name="Link A.J."/>
            <person name="Ren L."/>
            <person name="Jennings J.L."/>
            <person name="McDonald W.H."/>
            <person name="Gould K.L."/>
        </authorList>
    </citation>
    <scope>IDENTIFICATION IN THE CWC COMPLEX</scope>
    <scope>IDENTIFICATION BY MASS SPECTROMETRY</scope>
</reference>
<reference key="7">
    <citation type="journal article" date="2002" name="RNA">
        <title>Characterization of interactions among the Cef1p-Prp19p-associated splicing complex.</title>
        <authorList>
            <person name="Ohi M.D."/>
            <person name="Gould K.L."/>
        </authorList>
    </citation>
    <scope>INTERACTION WITH PRP19 AND ISY1</scope>
</reference>
<reference key="8">
    <citation type="journal article" date="2003" name="Genetics">
        <title>Genetic interactions with CLF1 identify additional pre-mRNA splicing factors and a link between activators of yeast vesicular transport and splicing.</title>
        <authorList>
            <person name="Vincent K."/>
            <person name="Wang Q."/>
            <person name="Jay S."/>
            <person name="Hobbs K."/>
            <person name="Rymond B.C."/>
        </authorList>
    </citation>
    <scope>MUTAGENESIS OF GLY-79</scope>
</reference>
<reference key="9">
    <citation type="journal article" date="2003" name="Mol. Cell">
        <title>Assigning function to yeast proteins by integration of technologies.</title>
        <authorList>
            <person name="Hazbun T.R."/>
            <person name="Malmstroem L."/>
            <person name="Anderson S."/>
            <person name="Graczyk B.J."/>
            <person name="Fox B."/>
            <person name="Riffle M."/>
            <person name="Sundin B.A."/>
            <person name="Aranda J.D."/>
            <person name="McDonald W.H."/>
            <person name="Chiu C.-H."/>
            <person name="Snydsman B.E."/>
            <person name="Bradley P."/>
            <person name="Muller E.G.D."/>
            <person name="Fields S."/>
            <person name="Baker D."/>
            <person name="Yates J.R. III"/>
            <person name="Davis T.N."/>
        </authorList>
    </citation>
    <scope>IDENTIFICATION BY MASS SPECTROMETRY</scope>
    <scope>INTERACTION WITH PRP19</scope>
</reference>
<reference key="10">
    <citation type="journal article" date="2003" name="Nature">
        <title>Global analysis of protein localization in budding yeast.</title>
        <authorList>
            <person name="Huh W.-K."/>
            <person name="Falvo J.V."/>
            <person name="Gerke L.C."/>
            <person name="Carroll A.S."/>
            <person name="Howson R.W."/>
            <person name="Weissman J.S."/>
            <person name="O'Shea E.K."/>
        </authorList>
    </citation>
    <scope>SUBCELLULAR LOCATION [LARGE SCALE ANALYSIS]</scope>
</reference>
<reference key="11">
    <citation type="journal article" date="2003" name="Nature">
        <title>Global analysis of protein expression in yeast.</title>
        <authorList>
            <person name="Ghaemmaghami S."/>
            <person name="Huh W.-K."/>
            <person name="Bower K."/>
            <person name="Howson R.W."/>
            <person name="Belle A."/>
            <person name="Dephoure N."/>
            <person name="O'Shea E.K."/>
            <person name="Weissman J.S."/>
        </authorList>
    </citation>
    <scope>LEVEL OF PROTEIN EXPRESSION [LARGE SCALE ANALYSIS]</scope>
</reference>
<reference key="12">
    <citation type="journal article" date="2009" name="Nucleic Acids Res.">
        <title>The RNA binding protein Cwc2 interacts directly with the U6 snRNA to link the nineteen complex to the spliceosome during pre-mRNA splicing.</title>
        <authorList>
            <person name="McGrail J.C."/>
            <person name="Krause A."/>
            <person name="O'Keefe R.T."/>
        </authorList>
    </citation>
    <scope>FUNCTION</scope>
    <scope>MUTAGENESIS OF CYS-73; CYS-87 AND PHE-186</scope>
    <scope>RNA-BINDING</scope>
</reference>
<reference key="13">
    <citation type="journal article" date="2009" name="Science">
        <title>Global analysis of Cdk1 substrate phosphorylation sites provides insights into evolution.</title>
        <authorList>
            <person name="Holt L.J."/>
            <person name="Tuch B.B."/>
            <person name="Villen J."/>
            <person name="Johnson A.D."/>
            <person name="Gygi S.P."/>
            <person name="Morgan D.O."/>
        </authorList>
    </citation>
    <scope>PHOSPHORYLATION [LARGE SCALE ANALYSIS] AT SER-335 AND SER-336</scope>
    <scope>IDENTIFICATION BY MASS SPECTROMETRY [LARGE SCALE ANALYSIS]</scope>
</reference>
<reference key="14">
    <citation type="journal article" date="2012" name="EMBO J.">
        <title>Cwc2 and its human homologue RBM22 promote an active conformation of the spliceosome catalytic centre.</title>
        <authorList>
            <person name="Rasche N."/>
            <person name="Dybkov O."/>
            <person name="Schmitzova J."/>
            <person name="Akyildiz B."/>
            <person name="Fabrizio P."/>
            <person name="Luhrmann R."/>
        </authorList>
    </citation>
    <scope>FUNCTION</scope>
    <scope>RNA-BINDING</scope>
    <scope>IDENTIFICATION BY MASS SPECTROMETRY</scope>
</reference>
<keyword id="KW-0002">3D-structure</keyword>
<keyword id="KW-0131">Cell cycle</keyword>
<keyword id="KW-0479">Metal-binding</keyword>
<keyword id="KW-0507">mRNA processing</keyword>
<keyword id="KW-0508">mRNA splicing</keyword>
<keyword id="KW-0539">Nucleus</keyword>
<keyword id="KW-0597">Phosphoprotein</keyword>
<keyword id="KW-1185">Reference proteome</keyword>
<keyword id="KW-0694">RNA-binding</keyword>
<keyword id="KW-0747">Spliceosome</keyword>
<keyword id="KW-0862">Zinc</keyword>
<keyword id="KW-0863">Zinc-finger</keyword>
<name>CWC2_YEAST</name>
<proteinExistence type="evidence at protein level"/>
<sequence>MTSWRDKSAKVQVKESELPSSIPAQTGLTFNIWYNKWSQGFAGNTRFVSPFALQPQLHSGKTRGDNDGQLFFCLFFAKGMCCLGPKCEYLHHIPDEEDIGKLALRTEVLDCFGREKFADYREDMGGIGSFRKKNKTLYVGGIDGALNSKHLKPAQIESRIRFVFSRLGDIDRIRYVESKNCGFVKFKYQANAEFAKEAMSNQTLLLPSDKEWDDRREGTGLLVKWANEDPDPAAQKRLQEELKLESLNMMVHLINNNTNSAGTEVNNKNNERLDRTFPEASVDNVKKRLLPLDNGMESDDFIEKLKKVKKNISRENISSKPSVGKLGGPLLDYLSSDED</sequence>
<dbReference type="EMBL" id="X99000">
    <property type="protein sequence ID" value="CAA67482.1"/>
    <property type="molecule type" value="Genomic_DNA"/>
</dbReference>
<dbReference type="EMBL" id="Z74257">
    <property type="protein sequence ID" value="CAA98787.1"/>
    <property type="molecule type" value="Genomic_DNA"/>
</dbReference>
<dbReference type="EMBL" id="AY693022">
    <property type="protein sequence ID" value="AAT93041.1"/>
    <property type="molecule type" value="Genomic_DNA"/>
</dbReference>
<dbReference type="EMBL" id="BK006938">
    <property type="protein sequence ID" value="DAA11655.1"/>
    <property type="molecule type" value="Genomic_DNA"/>
</dbReference>
<dbReference type="PIR" id="S67768">
    <property type="entry name" value="S67768"/>
</dbReference>
<dbReference type="RefSeq" id="NP_010072.1">
    <property type="nucleotide sequence ID" value="NM_001180269.1"/>
</dbReference>
<dbReference type="PDB" id="3TP2">
    <property type="method" value="X-ray"/>
    <property type="resolution" value="2.40 A"/>
    <property type="chains" value="A/B=1-227"/>
</dbReference>
<dbReference type="PDB" id="3U1L">
    <property type="method" value="X-ray"/>
    <property type="resolution" value="1.64 A"/>
    <property type="chains" value="A=1-240"/>
</dbReference>
<dbReference type="PDB" id="3U1M">
    <property type="method" value="X-ray"/>
    <property type="resolution" value="1.95 A"/>
    <property type="chains" value="A=1-240"/>
</dbReference>
<dbReference type="PDB" id="5GM6">
    <property type="method" value="EM"/>
    <property type="resolution" value="3.50 A"/>
    <property type="chains" value="R=1-339"/>
</dbReference>
<dbReference type="PDB" id="5GMK">
    <property type="method" value="EM"/>
    <property type="resolution" value="3.40 A"/>
    <property type="chains" value="R=1-339"/>
</dbReference>
<dbReference type="PDB" id="5LJ3">
    <property type="method" value="EM"/>
    <property type="resolution" value="3.80 A"/>
    <property type="chains" value="M=1-339"/>
</dbReference>
<dbReference type="PDB" id="5LJ5">
    <property type="method" value="EM"/>
    <property type="resolution" value="3.80 A"/>
    <property type="chains" value="M=1-339"/>
</dbReference>
<dbReference type="PDB" id="5LQW">
    <property type="method" value="EM"/>
    <property type="resolution" value="5.80 A"/>
    <property type="chains" value="F=1-339"/>
</dbReference>
<dbReference type="PDB" id="5MPS">
    <property type="method" value="EM"/>
    <property type="resolution" value="3.85 A"/>
    <property type="chains" value="M=1-339"/>
</dbReference>
<dbReference type="PDB" id="5MQ0">
    <property type="method" value="EM"/>
    <property type="resolution" value="4.17 A"/>
    <property type="chains" value="M=1-339"/>
</dbReference>
<dbReference type="PDB" id="5WSG">
    <property type="method" value="EM"/>
    <property type="resolution" value="4.00 A"/>
    <property type="chains" value="R=1-339"/>
</dbReference>
<dbReference type="PDB" id="5Y88">
    <property type="method" value="EM"/>
    <property type="resolution" value="3.70 A"/>
    <property type="chains" value="N=1-339"/>
</dbReference>
<dbReference type="PDB" id="5YLZ">
    <property type="method" value="EM"/>
    <property type="resolution" value="3.60 A"/>
    <property type="chains" value="N=1-339"/>
</dbReference>
<dbReference type="PDB" id="6BK8">
    <property type="method" value="EM"/>
    <property type="resolution" value="3.30 A"/>
    <property type="chains" value="G=1-339"/>
</dbReference>
<dbReference type="PDB" id="6EXN">
    <property type="method" value="EM"/>
    <property type="resolution" value="3.70 A"/>
    <property type="chains" value="M=1-339"/>
</dbReference>
<dbReference type="PDB" id="6J6G">
    <property type="method" value="EM"/>
    <property type="resolution" value="3.20 A"/>
    <property type="chains" value="R=1-339"/>
</dbReference>
<dbReference type="PDB" id="6J6H">
    <property type="method" value="EM"/>
    <property type="resolution" value="3.60 A"/>
    <property type="chains" value="R=1-339"/>
</dbReference>
<dbReference type="PDB" id="6J6N">
    <property type="method" value="EM"/>
    <property type="resolution" value="3.86 A"/>
    <property type="chains" value="R=1-339"/>
</dbReference>
<dbReference type="PDB" id="6J6Q">
    <property type="method" value="EM"/>
    <property type="resolution" value="3.70 A"/>
    <property type="chains" value="R=1-339"/>
</dbReference>
<dbReference type="PDB" id="9DTR">
    <property type="method" value="EM"/>
    <property type="resolution" value="2.31 A"/>
    <property type="chains" value="M=1-339"/>
</dbReference>
<dbReference type="PDBsum" id="3TP2"/>
<dbReference type="PDBsum" id="3U1L"/>
<dbReference type="PDBsum" id="3U1M"/>
<dbReference type="PDBsum" id="5GM6"/>
<dbReference type="PDBsum" id="5GMK"/>
<dbReference type="PDBsum" id="5LJ3"/>
<dbReference type="PDBsum" id="5LJ5"/>
<dbReference type="PDBsum" id="5LQW"/>
<dbReference type="PDBsum" id="5MPS"/>
<dbReference type="PDBsum" id="5MQ0"/>
<dbReference type="PDBsum" id="5WSG"/>
<dbReference type="PDBsum" id="5Y88"/>
<dbReference type="PDBsum" id="5YLZ"/>
<dbReference type="PDBsum" id="6BK8"/>
<dbReference type="PDBsum" id="6EXN"/>
<dbReference type="PDBsum" id="6J6G"/>
<dbReference type="PDBsum" id="6J6H"/>
<dbReference type="PDBsum" id="6J6N"/>
<dbReference type="PDBsum" id="6J6Q"/>
<dbReference type="PDBsum" id="9DTR"/>
<dbReference type="EMDB" id="EMD-0686"/>
<dbReference type="EMDB" id="EMD-0687"/>
<dbReference type="EMDB" id="EMD-0691"/>
<dbReference type="EMDB" id="EMD-0692"/>
<dbReference type="EMDB" id="EMD-3539"/>
<dbReference type="EMDB" id="EMD-3541"/>
<dbReference type="EMDB" id="EMD-3979"/>
<dbReference type="EMDB" id="EMD-4057"/>
<dbReference type="EMDB" id="EMD-47157"/>
<dbReference type="EMDB" id="EMD-6817"/>
<dbReference type="EMDB" id="EMD-6839"/>
<dbReference type="EMDB" id="EMD-7109"/>
<dbReference type="EMDB" id="EMD-9524"/>
<dbReference type="EMDB" id="EMD-9525"/>
<dbReference type="SMR" id="Q12046"/>
<dbReference type="BioGRID" id="31837">
    <property type="interactions" value="124"/>
</dbReference>
<dbReference type="ComplexPortal" id="CPX-1651">
    <property type="entry name" value="PRP19-associated complex"/>
</dbReference>
<dbReference type="DIP" id="DIP-5164N"/>
<dbReference type="FunCoup" id="Q12046">
    <property type="interactions" value="277"/>
</dbReference>
<dbReference type="IntAct" id="Q12046">
    <property type="interactions" value="63"/>
</dbReference>
<dbReference type="STRING" id="4932.YDL209C"/>
<dbReference type="iPTMnet" id="Q12046"/>
<dbReference type="PaxDb" id="4932-YDL209C"/>
<dbReference type="PeptideAtlas" id="Q12046"/>
<dbReference type="EnsemblFungi" id="YDL209C_mRNA">
    <property type="protein sequence ID" value="YDL209C"/>
    <property type="gene ID" value="YDL209C"/>
</dbReference>
<dbReference type="GeneID" id="851318"/>
<dbReference type="KEGG" id="sce:YDL209C"/>
<dbReference type="AGR" id="SGD:S000002368"/>
<dbReference type="SGD" id="S000002368">
    <property type="gene designation" value="CWC2"/>
</dbReference>
<dbReference type="VEuPathDB" id="FungiDB:YDL209C"/>
<dbReference type="eggNOG" id="KOG0118">
    <property type="taxonomic scope" value="Eukaryota"/>
</dbReference>
<dbReference type="GeneTree" id="ENSGT00390000002792"/>
<dbReference type="HOGENOM" id="CLU_043308_0_0_1"/>
<dbReference type="InParanoid" id="Q12046"/>
<dbReference type="OMA" id="WYNKWSQ"/>
<dbReference type="OrthoDB" id="10251848at2759"/>
<dbReference type="BioCyc" id="YEAST:G3O-29591-MONOMER"/>
<dbReference type="BioGRID-ORCS" id="851318">
    <property type="hits" value="1 hit in 10 CRISPR screens"/>
</dbReference>
<dbReference type="EvolutionaryTrace" id="Q12046"/>
<dbReference type="PRO" id="PR:Q12046"/>
<dbReference type="Proteomes" id="UP000002311">
    <property type="component" value="Chromosome IV"/>
</dbReference>
<dbReference type="RNAct" id="Q12046">
    <property type="molecule type" value="protein"/>
</dbReference>
<dbReference type="GO" id="GO:0000974">
    <property type="term" value="C:Prp19 complex"/>
    <property type="evidence" value="ECO:0000353"/>
    <property type="project" value="ComplexPortal"/>
</dbReference>
<dbReference type="GO" id="GO:0071006">
    <property type="term" value="C:U2-type catalytic step 1 spliceosome"/>
    <property type="evidence" value="ECO:0000314"/>
    <property type="project" value="SGD"/>
</dbReference>
<dbReference type="GO" id="GO:0071007">
    <property type="term" value="C:U2-type catalytic step 2 spliceosome"/>
    <property type="evidence" value="ECO:0000314"/>
    <property type="project" value="SGD"/>
</dbReference>
<dbReference type="GO" id="GO:0036002">
    <property type="term" value="F:pre-mRNA binding"/>
    <property type="evidence" value="ECO:0000314"/>
    <property type="project" value="UniProtKB"/>
</dbReference>
<dbReference type="GO" id="GO:0017070">
    <property type="term" value="F:U6 snRNA binding"/>
    <property type="evidence" value="ECO:0000314"/>
    <property type="project" value="UniProtKB"/>
</dbReference>
<dbReference type="GO" id="GO:0008270">
    <property type="term" value="F:zinc ion binding"/>
    <property type="evidence" value="ECO:0007669"/>
    <property type="project" value="UniProtKB-KW"/>
</dbReference>
<dbReference type="GO" id="GO:0045292">
    <property type="term" value="P:mRNA cis splicing, via spliceosome"/>
    <property type="evidence" value="ECO:0000314"/>
    <property type="project" value="UniProtKB"/>
</dbReference>
<dbReference type="GO" id="GO:0000398">
    <property type="term" value="P:mRNA splicing, via spliceosome"/>
    <property type="evidence" value="ECO:0000315"/>
    <property type="project" value="SGD"/>
</dbReference>
<dbReference type="GO" id="GO:0045787">
    <property type="term" value="P:positive regulation of cell cycle"/>
    <property type="evidence" value="ECO:0000315"/>
    <property type="project" value="UniProtKB"/>
</dbReference>
<dbReference type="GO" id="GO:0033120">
    <property type="term" value="P:positive regulation of RNA splicing"/>
    <property type="evidence" value="ECO:0000314"/>
    <property type="project" value="UniProtKB"/>
</dbReference>
<dbReference type="GO" id="GO:0000387">
    <property type="term" value="P:spliceosomal snRNP assembly"/>
    <property type="evidence" value="ECO:0000314"/>
    <property type="project" value="UniProtKB"/>
</dbReference>
<dbReference type="CDD" id="cd12360">
    <property type="entry name" value="RRM_cwf2"/>
    <property type="match status" value="1"/>
</dbReference>
<dbReference type="FunFam" id="3.30.70.330:FF:000713">
    <property type="entry name" value="Pre-mRNA-splicing factor CWC2"/>
    <property type="match status" value="1"/>
</dbReference>
<dbReference type="Gene3D" id="3.30.70.330">
    <property type="match status" value="1"/>
</dbReference>
<dbReference type="InterPro" id="IPR039171">
    <property type="entry name" value="Cwc2/Slt11"/>
</dbReference>
<dbReference type="InterPro" id="IPR034181">
    <property type="entry name" value="Cwc2_RRM"/>
</dbReference>
<dbReference type="InterPro" id="IPR012677">
    <property type="entry name" value="Nucleotide-bd_a/b_plait_sf"/>
</dbReference>
<dbReference type="InterPro" id="IPR035979">
    <property type="entry name" value="RBD_domain_sf"/>
</dbReference>
<dbReference type="InterPro" id="IPR000504">
    <property type="entry name" value="RRM_dom"/>
</dbReference>
<dbReference type="InterPro" id="IPR032297">
    <property type="entry name" value="Torus"/>
</dbReference>
<dbReference type="InterPro" id="IPR000571">
    <property type="entry name" value="Znf_CCCH"/>
</dbReference>
<dbReference type="PANTHER" id="PTHR14089:SF2">
    <property type="entry name" value="PRE-MRNA-SPLICING FACTOR CWC2"/>
    <property type="match status" value="1"/>
</dbReference>
<dbReference type="PANTHER" id="PTHR14089">
    <property type="entry name" value="PRE-MRNA-SPLICING FACTOR RBM22"/>
    <property type="match status" value="1"/>
</dbReference>
<dbReference type="Pfam" id="PF00076">
    <property type="entry name" value="RRM_1"/>
    <property type="match status" value="1"/>
</dbReference>
<dbReference type="Pfam" id="PF16131">
    <property type="entry name" value="Torus"/>
    <property type="match status" value="1"/>
</dbReference>
<dbReference type="SUPFAM" id="SSF54928">
    <property type="entry name" value="RNA-binding domain, RBD"/>
    <property type="match status" value="1"/>
</dbReference>
<dbReference type="PROSITE" id="PS50102">
    <property type="entry name" value="RRM"/>
    <property type="match status" value="1"/>
</dbReference>
<dbReference type="PROSITE" id="PS50103">
    <property type="entry name" value="ZF_C3H1"/>
    <property type="match status" value="1"/>
</dbReference>
<accession>Q12046</accession>
<accession>D6VRE5</accession>